<proteinExistence type="inferred from homology"/>
<gene>
    <name evidence="1" type="primary">lysS</name>
    <name type="ordered locus">Pfl01_1060</name>
</gene>
<feature type="chain" id="PRO_1000012913" description="Lysine--tRNA ligase">
    <location>
        <begin position="1"/>
        <end position="499"/>
    </location>
</feature>
<feature type="binding site" evidence="1">
    <location>
        <position position="409"/>
    </location>
    <ligand>
        <name>Mg(2+)</name>
        <dbReference type="ChEBI" id="CHEBI:18420"/>
        <label>1</label>
    </ligand>
</feature>
<feature type="binding site" evidence="1">
    <location>
        <position position="416"/>
    </location>
    <ligand>
        <name>Mg(2+)</name>
        <dbReference type="ChEBI" id="CHEBI:18420"/>
        <label>1</label>
    </ligand>
</feature>
<feature type="binding site" evidence="1">
    <location>
        <position position="416"/>
    </location>
    <ligand>
        <name>Mg(2+)</name>
        <dbReference type="ChEBI" id="CHEBI:18420"/>
        <label>2</label>
    </ligand>
</feature>
<protein>
    <recommendedName>
        <fullName evidence="1">Lysine--tRNA ligase</fullName>
        <ecNumber evidence="1">6.1.1.6</ecNumber>
    </recommendedName>
    <alternativeName>
        <fullName evidence="1">Lysyl-tRNA synthetase</fullName>
        <shortName evidence="1">LysRS</shortName>
    </alternativeName>
</protein>
<evidence type="ECO:0000255" key="1">
    <source>
        <dbReference type="HAMAP-Rule" id="MF_00252"/>
    </source>
</evidence>
<reference key="1">
    <citation type="journal article" date="2009" name="Genome Biol.">
        <title>Genomic and genetic analyses of diversity and plant interactions of Pseudomonas fluorescens.</title>
        <authorList>
            <person name="Silby M.W."/>
            <person name="Cerdeno-Tarraga A.M."/>
            <person name="Vernikos G.S."/>
            <person name="Giddens S.R."/>
            <person name="Jackson R.W."/>
            <person name="Preston G.M."/>
            <person name="Zhang X.-X."/>
            <person name="Moon C.D."/>
            <person name="Gehrig S.M."/>
            <person name="Godfrey S.A.C."/>
            <person name="Knight C.G."/>
            <person name="Malone J.G."/>
            <person name="Robinson Z."/>
            <person name="Spiers A.J."/>
            <person name="Harris S."/>
            <person name="Challis G.L."/>
            <person name="Yaxley A.M."/>
            <person name="Harris D."/>
            <person name="Seeger K."/>
            <person name="Murphy L."/>
            <person name="Rutter S."/>
            <person name="Squares R."/>
            <person name="Quail M.A."/>
            <person name="Saunders E."/>
            <person name="Mavromatis K."/>
            <person name="Brettin T.S."/>
            <person name="Bentley S.D."/>
            <person name="Hothersall J."/>
            <person name="Stephens E."/>
            <person name="Thomas C.M."/>
            <person name="Parkhill J."/>
            <person name="Levy S.B."/>
            <person name="Rainey P.B."/>
            <person name="Thomson N.R."/>
        </authorList>
    </citation>
    <scope>NUCLEOTIDE SEQUENCE [LARGE SCALE GENOMIC DNA]</scope>
    <source>
        <strain>Pf0-1</strain>
    </source>
</reference>
<organism>
    <name type="scientific">Pseudomonas fluorescens (strain Pf0-1)</name>
    <dbReference type="NCBI Taxonomy" id="205922"/>
    <lineage>
        <taxon>Bacteria</taxon>
        <taxon>Pseudomonadati</taxon>
        <taxon>Pseudomonadota</taxon>
        <taxon>Gammaproteobacteria</taxon>
        <taxon>Pseudomonadales</taxon>
        <taxon>Pseudomonadaceae</taxon>
        <taxon>Pseudomonas</taxon>
    </lineage>
</organism>
<dbReference type="EC" id="6.1.1.6" evidence="1"/>
<dbReference type="EMBL" id="CP000094">
    <property type="protein sequence ID" value="ABA72803.1"/>
    <property type="molecule type" value="Genomic_DNA"/>
</dbReference>
<dbReference type="RefSeq" id="WP_011332646.1">
    <property type="nucleotide sequence ID" value="NC_007492.2"/>
</dbReference>
<dbReference type="SMR" id="Q3KHF3"/>
<dbReference type="KEGG" id="pfo:Pfl01_1060"/>
<dbReference type="eggNOG" id="COG1190">
    <property type="taxonomic scope" value="Bacteria"/>
</dbReference>
<dbReference type="HOGENOM" id="CLU_008255_6_0_6"/>
<dbReference type="Proteomes" id="UP000002704">
    <property type="component" value="Chromosome"/>
</dbReference>
<dbReference type="GO" id="GO:0005829">
    <property type="term" value="C:cytosol"/>
    <property type="evidence" value="ECO:0007669"/>
    <property type="project" value="TreeGrafter"/>
</dbReference>
<dbReference type="GO" id="GO:0005524">
    <property type="term" value="F:ATP binding"/>
    <property type="evidence" value="ECO:0007669"/>
    <property type="project" value="UniProtKB-UniRule"/>
</dbReference>
<dbReference type="GO" id="GO:0004824">
    <property type="term" value="F:lysine-tRNA ligase activity"/>
    <property type="evidence" value="ECO:0007669"/>
    <property type="project" value="UniProtKB-UniRule"/>
</dbReference>
<dbReference type="GO" id="GO:0000287">
    <property type="term" value="F:magnesium ion binding"/>
    <property type="evidence" value="ECO:0007669"/>
    <property type="project" value="UniProtKB-UniRule"/>
</dbReference>
<dbReference type="GO" id="GO:0000049">
    <property type="term" value="F:tRNA binding"/>
    <property type="evidence" value="ECO:0007669"/>
    <property type="project" value="TreeGrafter"/>
</dbReference>
<dbReference type="GO" id="GO:0006430">
    <property type="term" value="P:lysyl-tRNA aminoacylation"/>
    <property type="evidence" value="ECO:0007669"/>
    <property type="project" value="UniProtKB-UniRule"/>
</dbReference>
<dbReference type="CDD" id="cd00775">
    <property type="entry name" value="LysRS_core"/>
    <property type="match status" value="1"/>
</dbReference>
<dbReference type="CDD" id="cd04322">
    <property type="entry name" value="LysRS_N"/>
    <property type="match status" value="1"/>
</dbReference>
<dbReference type="FunFam" id="2.40.50.140:FF:000024">
    <property type="entry name" value="Lysine--tRNA ligase"/>
    <property type="match status" value="1"/>
</dbReference>
<dbReference type="FunFam" id="3.30.930.10:FF:000001">
    <property type="entry name" value="Lysine--tRNA ligase"/>
    <property type="match status" value="1"/>
</dbReference>
<dbReference type="Gene3D" id="3.30.930.10">
    <property type="entry name" value="Bira Bifunctional Protein, Domain 2"/>
    <property type="match status" value="1"/>
</dbReference>
<dbReference type="Gene3D" id="2.40.50.140">
    <property type="entry name" value="Nucleic acid-binding proteins"/>
    <property type="match status" value="1"/>
</dbReference>
<dbReference type="HAMAP" id="MF_00252">
    <property type="entry name" value="Lys_tRNA_synth_class2"/>
    <property type="match status" value="1"/>
</dbReference>
<dbReference type="InterPro" id="IPR004364">
    <property type="entry name" value="Aa-tRNA-synt_II"/>
</dbReference>
<dbReference type="InterPro" id="IPR006195">
    <property type="entry name" value="aa-tRNA-synth_II"/>
</dbReference>
<dbReference type="InterPro" id="IPR045864">
    <property type="entry name" value="aa-tRNA-synth_II/BPL/LPL"/>
</dbReference>
<dbReference type="InterPro" id="IPR002313">
    <property type="entry name" value="Lys-tRNA-ligase_II"/>
</dbReference>
<dbReference type="InterPro" id="IPR044136">
    <property type="entry name" value="Lys-tRNA-ligase_II_N"/>
</dbReference>
<dbReference type="InterPro" id="IPR018149">
    <property type="entry name" value="Lys-tRNA-synth_II_C"/>
</dbReference>
<dbReference type="InterPro" id="IPR012340">
    <property type="entry name" value="NA-bd_OB-fold"/>
</dbReference>
<dbReference type="InterPro" id="IPR004365">
    <property type="entry name" value="NA-bd_OB_tRNA"/>
</dbReference>
<dbReference type="NCBIfam" id="TIGR00499">
    <property type="entry name" value="lysS_bact"/>
    <property type="match status" value="1"/>
</dbReference>
<dbReference type="NCBIfam" id="NF001756">
    <property type="entry name" value="PRK00484.1"/>
    <property type="match status" value="1"/>
</dbReference>
<dbReference type="PANTHER" id="PTHR42918:SF15">
    <property type="entry name" value="LYSINE--TRNA LIGASE, CHLOROPLASTIC_MITOCHONDRIAL"/>
    <property type="match status" value="1"/>
</dbReference>
<dbReference type="PANTHER" id="PTHR42918">
    <property type="entry name" value="LYSYL-TRNA SYNTHETASE"/>
    <property type="match status" value="1"/>
</dbReference>
<dbReference type="Pfam" id="PF00152">
    <property type="entry name" value="tRNA-synt_2"/>
    <property type="match status" value="1"/>
</dbReference>
<dbReference type="Pfam" id="PF01336">
    <property type="entry name" value="tRNA_anti-codon"/>
    <property type="match status" value="1"/>
</dbReference>
<dbReference type="PRINTS" id="PR00982">
    <property type="entry name" value="TRNASYNTHLYS"/>
</dbReference>
<dbReference type="SUPFAM" id="SSF55681">
    <property type="entry name" value="Class II aaRS and biotin synthetases"/>
    <property type="match status" value="1"/>
</dbReference>
<dbReference type="SUPFAM" id="SSF50249">
    <property type="entry name" value="Nucleic acid-binding proteins"/>
    <property type="match status" value="1"/>
</dbReference>
<dbReference type="PROSITE" id="PS50862">
    <property type="entry name" value="AA_TRNA_LIGASE_II"/>
    <property type="match status" value="1"/>
</dbReference>
<name>SYK_PSEPF</name>
<comment type="catalytic activity">
    <reaction evidence="1">
        <text>tRNA(Lys) + L-lysine + ATP = L-lysyl-tRNA(Lys) + AMP + diphosphate</text>
        <dbReference type="Rhea" id="RHEA:20792"/>
        <dbReference type="Rhea" id="RHEA-COMP:9696"/>
        <dbReference type="Rhea" id="RHEA-COMP:9697"/>
        <dbReference type="ChEBI" id="CHEBI:30616"/>
        <dbReference type="ChEBI" id="CHEBI:32551"/>
        <dbReference type="ChEBI" id="CHEBI:33019"/>
        <dbReference type="ChEBI" id="CHEBI:78442"/>
        <dbReference type="ChEBI" id="CHEBI:78529"/>
        <dbReference type="ChEBI" id="CHEBI:456215"/>
        <dbReference type="EC" id="6.1.1.6"/>
    </reaction>
</comment>
<comment type="cofactor">
    <cofactor evidence="1">
        <name>Mg(2+)</name>
        <dbReference type="ChEBI" id="CHEBI:18420"/>
    </cofactor>
    <text evidence="1">Binds 3 Mg(2+) ions per subunit.</text>
</comment>
<comment type="subunit">
    <text evidence="1">Homodimer.</text>
</comment>
<comment type="subcellular location">
    <subcellularLocation>
        <location evidence="1">Cytoplasm</location>
    </subcellularLocation>
</comment>
<comment type="similarity">
    <text evidence="1">Belongs to the class-II aminoacyl-tRNA synthetase family.</text>
</comment>
<sequence>MSDQQLDQALQQEENSLIALRKEKLAAERAKGNAFPNDFRRDNYCDALQKQYADKTKEELAEAAIPVKVAGRIMLNRGSFMVIQDMTGRIQVYVNRKTLSEETLAAVKTWDMGDIIAAEGTLARSGKGDLYVEMTSVRLLTKSLRPLPDKHHGLTDTEQRYRQRYVDLIVNEDVRQTFRVRSQVIAHIRSFLMKRDFLEVETPMLQTIPGGAAAKPFETHHNALDMEMFLRIAPELYLKRLVVGGFEKVFEINRNFRNEGVSTRHNPEFTMLEFYQAYADYEDNMDLTEELFRELAQLVLGSTDVPYGDKVFHFGEPFVRLSVFDSILKYNPELTADDLNDIDKARAIAKKAGAKVLGFEGLGKLQVMIFEELVEHKLEQPHFITQYPFEVSPLARRNDDNPNVTDRFELFIGGREIANAYSELNDAEDQAERFMAQVADKDAGDDEAMHYDADFVRALEYGMPPTAGEGIGIDRLVMLLTNSPSIRDVILFPHMRPQA</sequence>
<accession>Q3KHF3</accession>
<keyword id="KW-0030">Aminoacyl-tRNA synthetase</keyword>
<keyword id="KW-0067">ATP-binding</keyword>
<keyword id="KW-0963">Cytoplasm</keyword>
<keyword id="KW-0436">Ligase</keyword>
<keyword id="KW-0460">Magnesium</keyword>
<keyword id="KW-0479">Metal-binding</keyword>
<keyword id="KW-0547">Nucleotide-binding</keyword>
<keyword id="KW-0648">Protein biosynthesis</keyword>